<protein>
    <recommendedName>
        <fullName evidence="1">Fe-S cluster assembly protein DRE2</fullName>
    </recommendedName>
    <alternativeName>
        <fullName evidence="1">Anamorsin homolog</fullName>
    </alternativeName>
</protein>
<reference key="1">
    <citation type="journal article" date="2004" name="Nature">
        <title>Genome evolution in yeasts.</title>
        <authorList>
            <person name="Dujon B."/>
            <person name="Sherman D."/>
            <person name="Fischer G."/>
            <person name="Durrens P."/>
            <person name="Casaregola S."/>
            <person name="Lafontaine I."/>
            <person name="de Montigny J."/>
            <person name="Marck C."/>
            <person name="Neuveglise C."/>
            <person name="Talla E."/>
            <person name="Goffard N."/>
            <person name="Frangeul L."/>
            <person name="Aigle M."/>
            <person name="Anthouard V."/>
            <person name="Babour A."/>
            <person name="Barbe V."/>
            <person name="Barnay S."/>
            <person name="Blanchin S."/>
            <person name="Beckerich J.-M."/>
            <person name="Beyne E."/>
            <person name="Bleykasten C."/>
            <person name="Boisrame A."/>
            <person name="Boyer J."/>
            <person name="Cattolico L."/>
            <person name="Confanioleri F."/>
            <person name="de Daruvar A."/>
            <person name="Despons L."/>
            <person name="Fabre E."/>
            <person name="Fairhead C."/>
            <person name="Ferry-Dumazet H."/>
            <person name="Groppi A."/>
            <person name="Hantraye F."/>
            <person name="Hennequin C."/>
            <person name="Jauniaux N."/>
            <person name="Joyet P."/>
            <person name="Kachouri R."/>
            <person name="Kerrest A."/>
            <person name="Koszul R."/>
            <person name="Lemaire M."/>
            <person name="Lesur I."/>
            <person name="Ma L."/>
            <person name="Muller H."/>
            <person name="Nicaud J.-M."/>
            <person name="Nikolski M."/>
            <person name="Oztas S."/>
            <person name="Ozier-Kalogeropoulos O."/>
            <person name="Pellenz S."/>
            <person name="Potier S."/>
            <person name="Richard G.-F."/>
            <person name="Straub M.-L."/>
            <person name="Suleau A."/>
            <person name="Swennen D."/>
            <person name="Tekaia F."/>
            <person name="Wesolowski-Louvel M."/>
            <person name="Westhof E."/>
            <person name="Wirth B."/>
            <person name="Zeniou-Meyer M."/>
            <person name="Zivanovic Y."/>
            <person name="Bolotin-Fukuhara M."/>
            <person name="Thierry A."/>
            <person name="Bouchier C."/>
            <person name="Caudron B."/>
            <person name="Scarpelli C."/>
            <person name="Gaillardin C."/>
            <person name="Weissenbach J."/>
            <person name="Wincker P."/>
            <person name="Souciet J.-L."/>
        </authorList>
    </citation>
    <scope>NUCLEOTIDE SEQUENCE [LARGE SCALE GENOMIC DNA]</scope>
    <source>
        <strain>CLIB 122 / E 150</strain>
    </source>
</reference>
<keyword id="KW-0001">2Fe-2S</keyword>
<keyword id="KW-0004">4Fe-4S</keyword>
<keyword id="KW-0963">Cytoplasm</keyword>
<keyword id="KW-0408">Iron</keyword>
<keyword id="KW-0411">Iron-sulfur</keyword>
<keyword id="KW-0479">Metal-binding</keyword>
<keyword id="KW-0496">Mitochondrion</keyword>
<keyword id="KW-1185">Reference proteome</keyword>
<gene>
    <name evidence="1" type="primary">DRE2</name>
    <name type="ordered locus">YALI0C06215g</name>
</gene>
<proteinExistence type="inferred from homology"/>
<feature type="chain" id="PRO_0000324874" description="Fe-S cluster assembly protein DRE2">
    <location>
        <begin position="1"/>
        <end position="280"/>
    </location>
</feature>
<feature type="region of interest" description="N-terminal SAM-like domain" evidence="1">
    <location>
        <begin position="1"/>
        <end position="121"/>
    </location>
</feature>
<feature type="region of interest" description="Linker" evidence="1">
    <location>
        <begin position="122"/>
        <end position="176"/>
    </location>
</feature>
<feature type="region of interest" description="Fe-S binding site A" evidence="1">
    <location>
        <begin position="186"/>
        <end position="203"/>
    </location>
</feature>
<feature type="region of interest" description="Fe-S binding site B" evidence="1">
    <location>
        <begin position="244"/>
        <end position="258"/>
    </location>
</feature>
<feature type="short sequence motif" description="Cx2C motif 1" evidence="1">
    <location>
        <begin position="244"/>
        <end position="247"/>
    </location>
</feature>
<feature type="short sequence motif" description="Cx2C motif 2" evidence="1">
    <location>
        <begin position="255"/>
        <end position="258"/>
    </location>
</feature>
<feature type="binding site" evidence="1">
    <location>
        <position position="186"/>
    </location>
    <ligand>
        <name>[2Fe-2S] cluster</name>
        <dbReference type="ChEBI" id="CHEBI:190135"/>
    </ligand>
</feature>
<feature type="binding site" evidence="1">
    <location>
        <position position="198"/>
    </location>
    <ligand>
        <name>[2Fe-2S] cluster</name>
        <dbReference type="ChEBI" id="CHEBI:190135"/>
    </ligand>
</feature>
<feature type="binding site" evidence="1">
    <location>
        <position position="201"/>
    </location>
    <ligand>
        <name>[2Fe-2S] cluster</name>
        <dbReference type="ChEBI" id="CHEBI:190135"/>
    </ligand>
</feature>
<feature type="binding site" evidence="1">
    <location>
        <position position="203"/>
    </location>
    <ligand>
        <name>[2Fe-2S] cluster</name>
        <dbReference type="ChEBI" id="CHEBI:190135"/>
    </ligand>
</feature>
<feature type="binding site" evidence="1">
    <location>
        <position position="244"/>
    </location>
    <ligand>
        <name>[4Fe-4S] cluster</name>
        <dbReference type="ChEBI" id="CHEBI:49883"/>
    </ligand>
</feature>
<feature type="binding site" evidence="1">
    <location>
        <position position="247"/>
    </location>
    <ligand>
        <name>[4Fe-4S] cluster</name>
        <dbReference type="ChEBI" id="CHEBI:49883"/>
    </ligand>
</feature>
<feature type="binding site" evidence="1">
    <location>
        <position position="255"/>
    </location>
    <ligand>
        <name>[4Fe-4S] cluster</name>
        <dbReference type="ChEBI" id="CHEBI:49883"/>
    </ligand>
</feature>
<feature type="binding site" evidence="1">
    <location>
        <position position="258"/>
    </location>
    <ligand>
        <name>[4Fe-4S] cluster</name>
        <dbReference type="ChEBI" id="CHEBI:49883"/>
    </ligand>
</feature>
<organism>
    <name type="scientific">Yarrowia lipolytica (strain CLIB 122 / E 150)</name>
    <name type="common">Yeast</name>
    <name type="synonym">Candida lipolytica</name>
    <dbReference type="NCBI Taxonomy" id="284591"/>
    <lineage>
        <taxon>Eukaryota</taxon>
        <taxon>Fungi</taxon>
        <taxon>Dikarya</taxon>
        <taxon>Ascomycota</taxon>
        <taxon>Saccharomycotina</taxon>
        <taxon>Dipodascomycetes</taxon>
        <taxon>Dipodascales</taxon>
        <taxon>Dipodascales incertae sedis</taxon>
        <taxon>Yarrowia</taxon>
    </lineage>
</organism>
<sequence>MSNLLVFDNSVVTDEALVANIMAQNQGASHQLLERIGTQVQLPANTYASIQVFTKSPQPVTLPASLLETLSGALAPGGALFGAVDGSQVMDFIMAGLAQDGDKWVKPAATGTTLLKKSGGGPKKFAFKRASPATAAPSTNGTNPAATVNLNSVVTLSMDDDDLMDEDDLMEDDTNLSMPIKIPAKCDPGPGKKRRKACKDCTCGLKEMEEQAKDAQLAAQNTVTLSAEDTAEIDFTVQGKTGGCGSCALGDAFRCDGCPYLGLPPFKPGEAVSIGGASDL</sequence>
<comment type="function">
    <text evidence="1">Component of the cytosolic iron-sulfur (Fe-S) protein assembly (CIA) machinery required for the maturation of extramitochondrial Fe-S proteins. Part of an electron transfer chain functioning in an early step of cytosolic Fe-S biogenesis, facilitating the de novo assembly of a [4Fe-4S] cluster on the scaffold complex CFD1-NBP35. Electrons are transferred to DRE2 from NADPH via the FAD- and FMN-containing protein TAH18. TAH18-DRE2 are also required for the assembly of the diferric tyrosyl radical cofactor of ribonucleotide reductase (RNR), probably by providing electrons for reduction during radical cofactor maturation in the catalytic small subunit RNR2.</text>
</comment>
<comment type="cofactor">
    <cofactor evidence="1">
        <name>[2Fe-2S] cluster</name>
        <dbReference type="ChEBI" id="CHEBI:190135"/>
    </cofactor>
</comment>
<comment type="cofactor">
    <cofactor evidence="1">
        <name>[4Fe-4S] cluster</name>
        <dbReference type="ChEBI" id="CHEBI:49883"/>
    </cofactor>
</comment>
<comment type="subunit">
    <text evidence="1">Monomer. Interacts with TAH18. Interacts with MIA40.</text>
</comment>
<comment type="subcellular location">
    <subcellularLocation>
        <location evidence="1">Cytoplasm</location>
    </subcellularLocation>
    <subcellularLocation>
        <location evidence="1">Mitochondrion intermembrane space</location>
    </subcellularLocation>
</comment>
<comment type="domain">
    <text evidence="1">The C-terminal domain binds 2 Fe-S clusters but is otherwise mostly in an intrinsically disordered conformation.</text>
</comment>
<comment type="domain">
    <text evidence="1">The N-terminal domain has structural similarity with S-adenosyl-L-methionine-dependent methyltransferases, but does not bind S-adenosyl-L-methionine. It is required for correct assembly of the 2 Fe-S clusters.</text>
</comment>
<comment type="domain">
    <text evidence="1">The twin Cx2C motifs are involved in the recognition by the mitochondrial MIA40-ERV1 disulfide relay system. The formation of 2 disulfide bonds in the Cx2C motifs through dithiol/disulfide exchange reactions effectively traps the protein in the mitochondrial intermembrane space.</text>
</comment>
<comment type="similarity">
    <text evidence="1">Belongs to the anamorsin family.</text>
</comment>
<name>DRE2_YARLI</name>
<evidence type="ECO:0000255" key="1">
    <source>
        <dbReference type="HAMAP-Rule" id="MF_03115"/>
    </source>
</evidence>
<dbReference type="EMBL" id="CR382129">
    <property type="protein sequence ID" value="CAG81809.1"/>
    <property type="molecule type" value="Genomic_DNA"/>
</dbReference>
<dbReference type="RefSeq" id="XP_501508.1">
    <property type="nucleotide sequence ID" value="XM_501508.1"/>
</dbReference>
<dbReference type="SMR" id="Q6CCV4"/>
<dbReference type="FunCoup" id="Q6CCV4">
    <property type="interactions" value="171"/>
</dbReference>
<dbReference type="STRING" id="284591.Q6CCV4"/>
<dbReference type="EnsemblFungi" id="CAG81809">
    <property type="protein sequence ID" value="CAG81809"/>
    <property type="gene ID" value="YALI0_C06215g"/>
</dbReference>
<dbReference type="KEGG" id="yli:2909240"/>
<dbReference type="VEuPathDB" id="FungiDB:YALI0_C06215g"/>
<dbReference type="HOGENOM" id="CLU_067152_1_0_1"/>
<dbReference type="InParanoid" id="Q6CCV4"/>
<dbReference type="OrthoDB" id="118221at4891"/>
<dbReference type="Proteomes" id="UP000001300">
    <property type="component" value="Chromosome C"/>
</dbReference>
<dbReference type="GO" id="GO:0005737">
    <property type="term" value="C:cytoplasm"/>
    <property type="evidence" value="ECO:0000318"/>
    <property type="project" value="GO_Central"/>
</dbReference>
<dbReference type="GO" id="GO:0097361">
    <property type="term" value="C:cytosolic [4Fe-4S] assembly targeting complex"/>
    <property type="evidence" value="ECO:0007669"/>
    <property type="project" value="EnsemblFungi"/>
</dbReference>
<dbReference type="GO" id="GO:0005758">
    <property type="term" value="C:mitochondrial intermembrane space"/>
    <property type="evidence" value="ECO:0007669"/>
    <property type="project" value="UniProtKB-SubCell"/>
</dbReference>
<dbReference type="GO" id="GO:0051537">
    <property type="term" value="F:2 iron, 2 sulfur cluster binding"/>
    <property type="evidence" value="ECO:0007669"/>
    <property type="project" value="UniProtKB-UniRule"/>
</dbReference>
<dbReference type="GO" id="GO:0051539">
    <property type="term" value="F:4 iron, 4 sulfur cluster binding"/>
    <property type="evidence" value="ECO:0007669"/>
    <property type="project" value="UniProtKB-KW"/>
</dbReference>
<dbReference type="GO" id="GO:0009055">
    <property type="term" value="F:electron transfer activity"/>
    <property type="evidence" value="ECO:0007669"/>
    <property type="project" value="UniProtKB-UniRule"/>
</dbReference>
<dbReference type="GO" id="GO:0046872">
    <property type="term" value="F:metal ion binding"/>
    <property type="evidence" value="ECO:0007669"/>
    <property type="project" value="UniProtKB-KW"/>
</dbReference>
<dbReference type="GO" id="GO:0034599">
    <property type="term" value="P:cellular response to oxidative stress"/>
    <property type="evidence" value="ECO:0007669"/>
    <property type="project" value="EnsemblFungi"/>
</dbReference>
<dbReference type="GO" id="GO:0016226">
    <property type="term" value="P:iron-sulfur cluster assembly"/>
    <property type="evidence" value="ECO:0000318"/>
    <property type="project" value="GO_Central"/>
</dbReference>
<dbReference type="GO" id="GO:1901299">
    <property type="term" value="P:negative regulation of hydrogen peroxide-mediated programmed cell death"/>
    <property type="evidence" value="ECO:0007669"/>
    <property type="project" value="EnsemblFungi"/>
</dbReference>
<dbReference type="GO" id="GO:0045019">
    <property type="term" value="P:negative regulation of nitric oxide biosynthetic process"/>
    <property type="evidence" value="ECO:0007669"/>
    <property type="project" value="EnsemblFungi"/>
</dbReference>
<dbReference type="Gene3D" id="3.40.50.11000">
    <property type="entry name" value="Fe-S cluster assembly protein Dre2, N-terminal domain"/>
    <property type="match status" value="1"/>
</dbReference>
<dbReference type="HAMAP" id="MF_03115">
    <property type="entry name" value="Anamorsin"/>
    <property type="match status" value="1"/>
</dbReference>
<dbReference type="InterPro" id="IPR007785">
    <property type="entry name" value="Anamorsin"/>
</dbReference>
<dbReference type="InterPro" id="IPR046408">
    <property type="entry name" value="CIAPIN1"/>
</dbReference>
<dbReference type="InterPro" id="IPR031838">
    <property type="entry name" value="Dre2_N"/>
</dbReference>
<dbReference type="PANTHER" id="PTHR13273">
    <property type="entry name" value="ANAMORSIN"/>
    <property type="match status" value="1"/>
</dbReference>
<dbReference type="PANTHER" id="PTHR13273:SF14">
    <property type="entry name" value="ANAMORSIN"/>
    <property type="match status" value="1"/>
</dbReference>
<dbReference type="Pfam" id="PF05093">
    <property type="entry name" value="CIAPIN1"/>
    <property type="match status" value="1"/>
</dbReference>
<dbReference type="Pfam" id="PF16803">
    <property type="entry name" value="DRE2_N"/>
    <property type="match status" value="1"/>
</dbReference>
<accession>Q6CCV4</accession>